<gene>
    <name evidence="11" type="primary">Cstl1</name>
    <name evidence="5" type="synonym">Rcet1</name>
</gene>
<name>CSTL1_MOUSE</name>
<dbReference type="EMBL" id="AY706755">
    <property type="protein sequence ID" value="AAU20811.1"/>
    <property type="molecule type" value="mRNA"/>
</dbReference>
<dbReference type="EMBL" id="AY706756">
    <property type="protein sequence ID" value="AAU20812.1"/>
    <property type="molecule type" value="mRNA"/>
</dbReference>
<dbReference type="EMBL" id="AY707915">
    <property type="protein sequence ID" value="AAU20814.1"/>
    <property type="molecule type" value="mRNA"/>
</dbReference>
<dbReference type="EMBL" id="AK131797">
    <property type="protein sequence ID" value="BAE20810.1"/>
    <property type="molecule type" value="mRNA"/>
</dbReference>
<dbReference type="EMBL" id="AK132807">
    <property type="protein sequence ID" value="BAE21368.1"/>
    <property type="molecule type" value="mRNA"/>
</dbReference>
<dbReference type="EMBL" id="AL844519">
    <property type="status" value="NOT_ANNOTATED_CDS"/>
    <property type="molecule type" value="Genomic_DNA"/>
</dbReference>
<dbReference type="EMBL" id="CH466519">
    <property type="protein sequence ID" value="EDL28541.1"/>
    <property type="molecule type" value="Genomic_DNA"/>
</dbReference>
<dbReference type="EMBL" id="BC048646">
    <property type="protein sequence ID" value="AAH48646.1"/>
    <property type="molecule type" value="mRNA"/>
</dbReference>
<dbReference type="CCDS" id="CCDS16844.1">
    <molecule id="Q80Y72-1"/>
</dbReference>
<dbReference type="CCDS" id="CCDS89564.1">
    <molecule id="Q80Y72-2"/>
</dbReference>
<dbReference type="RefSeq" id="NP_808323.1">
    <molecule id="Q80Y72-1"/>
    <property type="nucleotide sequence ID" value="NM_177655.4"/>
</dbReference>
<dbReference type="RefSeq" id="XP_006499365.1">
    <molecule id="Q80Y72-1"/>
    <property type="nucleotide sequence ID" value="XM_006499302.2"/>
</dbReference>
<dbReference type="RefSeq" id="XP_006499366.1">
    <molecule id="Q80Y72-1"/>
    <property type="nucleotide sequence ID" value="XM_006499303.3"/>
</dbReference>
<dbReference type="SMR" id="Q80Y72"/>
<dbReference type="FunCoup" id="Q80Y72">
    <property type="interactions" value="23"/>
</dbReference>
<dbReference type="STRING" id="10090.ENSMUSP00000105581"/>
<dbReference type="GlyCosmos" id="Q80Y72">
    <property type="glycosylation" value="1 site, No reported glycans"/>
</dbReference>
<dbReference type="GlyGen" id="Q80Y72">
    <property type="glycosylation" value="1 site"/>
</dbReference>
<dbReference type="iPTMnet" id="Q80Y72"/>
<dbReference type="PhosphoSitePlus" id="Q80Y72"/>
<dbReference type="PaxDb" id="10090-ENSMUSP00000105581"/>
<dbReference type="ProteomicsDB" id="277905">
    <molecule id="Q80Y72-1"/>
</dbReference>
<dbReference type="Antibodypedia" id="42866">
    <property type="antibodies" value="94 antibodies from 20 providers"/>
</dbReference>
<dbReference type="DNASU" id="228756"/>
<dbReference type="Ensembl" id="ENSMUST00000109952.2">
    <molecule id="Q80Y72-1"/>
    <property type="protein sequence ID" value="ENSMUSP00000105578.2"/>
    <property type="gene ID" value="ENSMUSG00000055177.16"/>
</dbReference>
<dbReference type="Ensembl" id="ENSMUST00000109955.10">
    <molecule id="Q80Y72-1"/>
    <property type="protein sequence ID" value="ENSMUSP00000105581.4"/>
    <property type="gene ID" value="ENSMUSG00000055177.16"/>
</dbReference>
<dbReference type="GeneID" id="228756"/>
<dbReference type="KEGG" id="mmu:228756"/>
<dbReference type="UCSC" id="uc008mtj.1">
    <molecule id="Q80Y72-1"/>
    <property type="organism name" value="mouse"/>
</dbReference>
<dbReference type="UCSC" id="uc008mtk.1">
    <property type="organism name" value="mouse"/>
</dbReference>
<dbReference type="AGR" id="MGI:2652834"/>
<dbReference type="CTD" id="128817"/>
<dbReference type="MGI" id="MGI:2652834">
    <property type="gene designation" value="Cstl1"/>
</dbReference>
<dbReference type="VEuPathDB" id="HostDB:ENSMUSG00000055177"/>
<dbReference type="eggNOG" id="ENOG502SAEJ">
    <property type="taxonomic scope" value="Eukaryota"/>
</dbReference>
<dbReference type="GeneTree" id="ENSGT00900000141212"/>
<dbReference type="HOGENOM" id="CLU_118168_2_2_1"/>
<dbReference type="InParanoid" id="Q80Y72"/>
<dbReference type="OMA" id="FQRWGGF"/>
<dbReference type="OrthoDB" id="1908104at2759"/>
<dbReference type="PhylomeDB" id="Q80Y72"/>
<dbReference type="BioGRID-ORCS" id="228756">
    <property type="hits" value="0 hits in 76 CRISPR screens"/>
</dbReference>
<dbReference type="ChiTaRS" id="Cstl1">
    <property type="organism name" value="mouse"/>
</dbReference>
<dbReference type="PRO" id="PR:Q80Y72"/>
<dbReference type="Proteomes" id="UP000000589">
    <property type="component" value="Chromosome 2"/>
</dbReference>
<dbReference type="RNAct" id="Q80Y72">
    <property type="molecule type" value="protein"/>
</dbReference>
<dbReference type="Bgee" id="ENSMUSG00000055177">
    <property type="expression patterns" value="Expressed in spermatid and 22 other cell types or tissues"/>
</dbReference>
<dbReference type="ExpressionAtlas" id="Q80Y72">
    <property type="expression patterns" value="baseline and differential"/>
</dbReference>
<dbReference type="GO" id="GO:0005576">
    <property type="term" value="C:extracellular region"/>
    <property type="evidence" value="ECO:0007669"/>
    <property type="project" value="UniProtKB-SubCell"/>
</dbReference>
<dbReference type="GO" id="GO:0004869">
    <property type="term" value="F:cysteine-type endopeptidase inhibitor activity"/>
    <property type="evidence" value="ECO:0007669"/>
    <property type="project" value="UniProtKB-KW"/>
</dbReference>
<dbReference type="GO" id="GO:0008234">
    <property type="term" value="F:cysteine-type peptidase activity"/>
    <property type="evidence" value="ECO:0000314"/>
    <property type="project" value="MGI"/>
</dbReference>
<dbReference type="GO" id="GO:0140448">
    <property type="term" value="P:signaling receptor ligand precursor processing"/>
    <property type="evidence" value="ECO:0000314"/>
    <property type="project" value="MGI"/>
</dbReference>
<dbReference type="CDD" id="cd00042">
    <property type="entry name" value="CY"/>
    <property type="match status" value="1"/>
</dbReference>
<dbReference type="FunFam" id="3.10.450.10:FF:000004">
    <property type="entry name" value="Cystatin C"/>
    <property type="match status" value="1"/>
</dbReference>
<dbReference type="Gene3D" id="3.10.450.10">
    <property type="match status" value="1"/>
</dbReference>
<dbReference type="InterPro" id="IPR042921">
    <property type="entry name" value="CSTL1"/>
</dbReference>
<dbReference type="InterPro" id="IPR000010">
    <property type="entry name" value="Cystatin_dom"/>
</dbReference>
<dbReference type="InterPro" id="IPR046350">
    <property type="entry name" value="Cystatin_sf"/>
</dbReference>
<dbReference type="PANTHER" id="PTHR47887">
    <property type="entry name" value="CYSTATIN-LIKE 1"/>
    <property type="match status" value="1"/>
</dbReference>
<dbReference type="PANTHER" id="PTHR47887:SF1">
    <property type="entry name" value="CYSTATIN-LIKE 1"/>
    <property type="match status" value="1"/>
</dbReference>
<dbReference type="Pfam" id="PF00031">
    <property type="entry name" value="Cystatin"/>
    <property type="match status" value="1"/>
</dbReference>
<dbReference type="SMART" id="SM00043">
    <property type="entry name" value="CY"/>
    <property type="match status" value="1"/>
</dbReference>
<dbReference type="SUPFAM" id="SSF54403">
    <property type="entry name" value="Cystatin/monellin"/>
    <property type="match status" value="1"/>
</dbReference>
<organism evidence="12">
    <name type="scientific">Mus musculus</name>
    <name type="common">Mouse</name>
    <dbReference type="NCBI Taxonomy" id="10090"/>
    <lineage>
        <taxon>Eukaryota</taxon>
        <taxon>Metazoa</taxon>
        <taxon>Chordata</taxon>
        <taxon>Craniata</taxon>
        <taxon>Vertebrata</taxon>
        <taxon>Euteleostomi</taxon>
        <taxon>Mammalia</taxon>
        <taxon>Eutheria</taxon>
        <taxon>Euarchontoglires</taxon>
        <taxon>Glires</taxon>
        <taxon>Rodentia</taxon>
        <taxon>Myomorpha</taxon>
        <taxon>Muroidea</taxon>
        <taxon>Muridae</taxon>
        <taxon>Murinae</taxon>
        <taxon>Mus</taxon>
        <taxon>Mus</taxon>
    </lineage>
</organism>
<evidence type="ECO:0000250" key="1">
    <source>
        <dbReference type="UniProtKB" id="P19313"/>
    </source>
</evidence>
<evidence type="ECO:0000255" key="2"/>
<evidence type="ECO:0000255" key="3">
    <source>
        <dbReference type="RuleBase" id="RU362130"/>
    </source>
</evidence>
<evidence type="ECO:0000269" key="4">
    <source>
    </source>
</evidence>
<evidence type="ECO:0000303" key="5">
    <source>
    </source>
</evidence>
<evidence type="ECO:0000305" key="6"/>
<evidence type="ECO:0000312" key="7">
    <source>
        <dbReference type="EMBL" id="AAH48646.1"/>
    </source>
</evidence>
<evidence type="ECO:0000312" key="8">
    <source>
        <dbReference type="EMBL" id="AAU20811.1"/>
    </source>
</evidence>
<evidence type="ECO:0000312" key="9">
    <source>
        <dbReference type="EMBL" id="BAE21368.1"/>
    </source>
</evidence>
<evidence type="ECO:0000312" key="10">
    <source>
        <dbReference type="EMBL" id="EDL28541.1"/>
    </source>
</evidence>
<evidence type="ECO:0000312" key="11">
    <source>
        <dbReference type="MGI" id="MGI:2652834"/>
    </source>
</evidence>
<evidence type="ECO:0000312" key="12">
    <source>
        <dbReference type="Proteomes" id="UP000000589"/>
    </source>
</evidence>
<keyword id="KW-0025">Alternative splicing</keyword>
<keyword id="KW-1015">Disulfide bond</keyword>
<keyword id="KW-0325">Glycoprotein</keyword>
<keyword id="KW-0646">Protease inhibitor</keyword>
<keyword id="KW-1185">Reference proteome</keyword>
<keyword id="KW-0964">Secreted</keyword>
<keyword id="KW-0732">Signal</keyword>
<keyword id="KW-0789">Thiol protease inhibitor</keyword>
<reference evidence="8" key="1">
    <citation type="journal article" date="2008" name="DNA Seq.">
        <title>Cloning, characterization and identification of Rcet1-v1 and Rcet1-v2, two novel splice variants of mouse Rcet1 related to Cres subgroup of family 2 cystatins.</title>
        <authorList>
            <person name="Xiang Y."/>
            <person name="Nie D.S."/>
            <person name="Zhang Q.J."/>
            <person name="Zhu W.B."/>
            <person name="Du J."/>
            <person name="Li W."/>
            <person name="Lu G.X."/>
        </authorList>
    </citation>
    <scope>NUCLEOTIDE SEQUENCE [MRNA] (ISOFORMS 1 AND 2)</scope>
    <scope>TISSUE SPECIFICITY</scope>
    <scope>DEVELOPMENTAL STAGE</scope>
    <source>
        <tissue evidence="8">Testis</tissue>
    </source>
</reference>
<reference evidence="9" key="2">
    <citation type="journal article" date="2005" name="Science">
        <title>The transcriptional landscape of the mammalian genome.</title>
        <authorList>
            <person name="Carninci P."/>
            <person name="Kasukawa T."/>
            <person name="Katayama S."/>
            <person name="Gough J."/>
            <person name="Frith M.C."/>
            <person name="Maeda N."/>
            <person name="Oyama R."/>
            <person name="Ravasi T."/>
            <person name="Lenhard B."/>
            <person name="Wells C."/>
            <person name="Kodzius R."/>
            <person name="Shimokawa K."/>
            <person name="Bajic V.B."/>
            <person name="Brenner S.E."/>
            <person name="Batalov S."/>
            <person name="Forrest A.R."/>
            <person name="Zavolan M."/>
            <person name="Davis M.J."/>
            <person name="Wilming L.G."/>
            <person name="Aidinis V."/>
            <person name="Allen J.E."/>
            <person name="Ambesi-Impiombato A."/>
            <person name="Apweiler R."/>
            <person name="Aturaliya R.N."/>
            <person name="Bailey T.L."/>
            <person name="Bansal M."/>
            <person name="Baxter L."/>
            <person name="Beisel K.W."/>
            <person name="Bersano T."/>
            <person name="Bono H."/>
            <person name="Chalk A.M."/>
            <person name="Chiu K.P."/>
            <person name="Choudhary V."/>
            <person name="Christoffels A."/>
            <person name="Clutterbuck D.R."/>
            <person name="Crowe M.L."/>
            <person name="Dalla E."/>
            <person name="Dalrymple B.P."/>
            <person name="de Bono B."/>
            <person name="Della Gatta G."/>
            <person name="di Bernardo D."/>
            <person name="Down T."/>
            <person name="Engstrom P."/>
            <person name="Fagiolini M."/>
            <person name="Faulkner G."/>
            <person name="Fletcher C.F."/>
            <person name="Fukushima T."/>
            <person name="Furuno M."/>
            <person name="Futaki S."/>
            <person name="Gariboldi M."/>
            <person name="Georgii-Hemming P."/>
            <person name="Gingeras T.R."/>
            <person name="Gojobori T."/>
            <person name="Green R.E."/>
            <person name="Gustincich S."/>
            <person name="Harbers M."/>
            <person name="Hayashi Y."/>
            <person name="Hensch T.K."/>
            <person name="Hirokawa N."/>
            <person name="Hill D."/>
            <person name="Huminiecki L."/>
            <person name="Iacono M."/>
            <person name="Ikeo K."/>
            <person name="Iwama A."/>
            <person name="Ishikawa T."/>
            <person name="Jakt M."/>
            <person name="Kanapin A."/>
            <person name="Katoh M."/>
            <person name="Kawasawa Y."/>
            <person name="Kelso J."/>
            <person name="Kitamura H."/>
            <person name="Kitano H."/>
            <person name="Kollias G."/>
            <person name="Krishnan S.P."/>
            <person name="Kruger A."/>
            <person name="Kummerfeld S.K."/>
            <person name="Kurochkin I.V."/>
            <person name="Lareau L.F."/>
            <person name="Lazarevic D."/>
            <person name="Lipovich L."/>
            <person name="Liu J."/>
            <person name="Liuni S."/>
            <person name="McWilliam S."/>
            <person name="Madan Babu M."/>
            <person name="Madera M."/>
            <person name="Marchionni L."/>
            <person name="Matsuda H."/>
            <person name="Matsuzawa S."/>
            <person name="Miki H."/>
            <person name="Mignone F."/>
            <person name="Miyake S."/>
            <person name="Morris K."/>
            <person name="Mottagui-Tabar S."/>
            <person name="Mulder N."/>
            <person name="Nakano N."/>
            <person name="Nakauchi H."/>
            <person name="Ng P."/>
            <person name="Nilsson R."/>
            <person name="Nishiguchi S."/>
            <person name="Nishikawa S."/>
            <person name="Nori F."/>
            <person name="Ohara O."/>
            <person name="Okazaki Y."/>
            <person name="Orlando V."/>
            <person name="Pang K.C."/>
            <person name="Pavan W.J."/>
            <person name="Pavesi G."/>
            <person name="Pesole G."/>
            <person name="Petrovsky N."/>
            <person name="Piazza S."/>
            <person name="Reed J."/>
            <person name="Reid J.F."/>
            <person name="Ring B.Z."/>
            <person name="Ringwald M."/>
            <person name="Rost B."/>
            <person name="Ruan Y."/>
            <person name="Salzberg S.L."/>
            <person name="Sandelin A."/>
            <person name="Schneider C."/>
            <person name="Schoenbach C."/>
            <person name="Sekiguchi K."/>
            <person name="Semple C.A."/>
            <person name="Seno S."/>
            <person name="Sessa L."/>
            <person name="Sheng Y."/>
            <person name="Shibata Y."/>
            <person name="Shimada H."/>
            <person name="Shimada K."/>
            <person name="Silva D."/>
            <person name="Sinclair B."/>
            <person name="Sperling S."/>
            <person name="Stupka E."/>
            <person name="Sugiura K."/>
            <person name="Sultana R."/>
            <person name="Takenaka Y."/>
            <person name="Taki K."/>
            <person name="Tammoja K."/>
            <person name="Tan S.L."/>
            <person name="Tang S."/>
            <person name="Taylor M.S."/>
            <person name="Tegner J."/>
            <person name="Teichmann S.A."/>
            <person name="Ueda H.R."/>
            <person name="van Nimwegen E."/>
            <person name="Verardo R."/>
            <person name="Wei C.L."/>
            <person name="Yagi K."/>
            <person name="Yamanishi H."/>
            <person name="Zabarovsky E."/>
            <person name="Zhu S."/>
            <person name="Zimmer A."/>
            <person name="Hide W."/>
            <person name="Bult C."/>
            <person name="Grimmond S.M."/>
            <person name="Teasdale R.D."/>
            <person name="Liu E.T."/>
            <person name="Brusic V."/>
            <person name="Quackenbush J."/>
            <person name="Wahlestedt C."/>
            <person name="Mattick J.S."/>
            <person name="Hume D.A."/>
            <person name="Kai C."/>
            <person name="Sasaki D."/>
            <person name="Tomaru Y."/>
            <person name="Fukuda S."/>
            <person name="Kanamori-Katayama M."/>
            <person name="Suzuki M."/>
            <person name="Aoki J."/>
            <person name="Arakawa T."/>
            <person name="Iida J."/>
            <person name="Imamura K."/>
            <person name="Itoh M."/>
            <person name="Kato T."/>
            <person name="Kawaji H."/>
            <person name="Kawagashira N."/>
            <person name="Kawashima T."/>
            <person name="Kojima M."/>
            <person name="Kondo S."/>
            <person name="Konno H."/>
            <person name="Nakano K."/>
            <person name="Ninomiya N."/>
            <person name="Nishio T."/>
            <person name="Okada M."/>
            <person name="Plessy C."/>
            <person name="Shibata K."/>
            <person name="Shiraki T."/>
            <person name="Suzuki S."/>
            <person name="Tagami M."/>
            <person name="Waki K."/>
            <person name="Watahiki A."/>
            <person name="Okamura-Oho Y."/>
            <person name="Suzuki H."/>
            <person name="Kawai J."/>
            <person name="Hayashizaki Y."/>
        </authorList>
    </citation>
    <scope>NUCLEOTIDE SEQUENCE [LARGE SCALE MRNA] (ISOFORM 2)</scope>
    <source>
        <strain evidence="9">C57BL/6J</strain>
        <tissue evidence="9">Testis</tissue>
    </source>
</reference>
<reference evidence="12" key="3">
    <citation type="journal article" date="2009" name="PLoS Biol.">
        <title>Lineage-specific biology revealed by a finished genome assembly of the mouse.</title>
        <authorList>
            <person name="Church D.M."/>
            <person name="Goodstadt L."/>
            <person name="Hillier L.W."/>
            <person name="Zody M.C."/>
            <person name="Goldstein S."/>
            <person name="She X."/>
            <person name="Bult C.J."/>
            <person name="Agarwala R."/>
            <person name="Cherry J.L."/>
            <person name="DiCuccio M."/>
            <person name="Hlavina W."/>
            <person name="Kapustin Y."/>
            <person name="Meric P."/>
            <person name="Maglott D."/>
            <person name="Birtle Z."/>
            <person name="Marques A.C."/>
            <person name="Graves T."/>
            <person name="Zhou S."/>
            <person name="Teague B."/>
            <person name="Potamousis K."/>
            <person name="Churas C."/>
            <person name="Place M."/>
            <person name="Herschleb J."/>
            <person name="Runnheim R."/>
            <person name="Forrest D."/>
            <person name="Amos-Landgraf J."/>
            <person name="Schwartz D.C."/>
            <person name="Cheng Z."/>
            <person name="Lindblad-Toh K."/>
            <person name="Eichler E.E."/>
            <person name="Ponting C.P."/>
        </authorList>
    </citation>
    <scope>NUCLEOTIDE SEQUENCE [LARGE SCALE GENOMIC DNA]</scope>
    <source>
        <strain evidence="12">C57BL/6J</strain>
    </source>
</reference>
<reference evidence="10" key="4">
    <citation type="submission" date="2005-07" db="EMBL/GenBank/DDBJ databases">
        <authorList>
            <person name="Mural R.J."/>
            <person name="Adams M.D."/>
            <person name="Myers E.W."/>
            <person name="Smith H.O."/>
            <person name="Venter J.C."/>
        </authorList>
    </citation>
    <scope>NUCLEOTIDE SEQUENCE [LARGE SCALE GENOMIC DNA]</scope>
</reference>
<reference evidence="7" key="5">
    <citation type="journal article" date="2004" name="Genome Res.">
        <title>The status, quality, and expansion of the NIH full-length cDNA project: the Mammalian Gene Collection (MGC).</title>
        <authorList>
            <consortium name="The MGC Project Team"/>
        </authorList>
    </citation>
    <scope>NUCLEOTIDE SEQUENCE [LARGE SCALE MRNA]</scope>
    <source>
        <tissue evidence="7">Testis</tissue>
    </source>
</reference>
<sequence length="140" mass="16199">MEMKARGLRIPLLLLLVTVVVMAKVNHIQRWGGFKEKAMSKKNINSTLHFFIRSYNNASNDTYLYQVQKLIQGQMQLTTGVEYLVTVKIGRTKCKKNETKKASCPLQSSKLKKSLICKSLIYSVPWMNYYQLWNNSCQES</sequence>
<feature type="signal peptide" evidence="2">
    <location>
        <begin position="1"/>
        <end position="23"/>
    </location>
</feature>
<feature type="chain" id="PRO_5009369047" description="Cystatin-like 1">
    <location>
        <begin position="24"/>
        <end position="140"/>
    </location>
</feature>
<feature type="domain" description="Cystatin" evidence="2">
    <location>
        <begin position="32"/>
        <end position="126"/>
    </location>
</feature>
<feature type="glycosylation site" description="N-linked (GlcNAc...) asparagine" evidence="2">
    <location>
        <position position="45"/>
    </location>
</feature>
<feature type="disulfide bond" evidence="1">
    <location>
        <begin position="94"/>
        <end position="104"/>
    </location>
</feature>
<feature type="disulfide bond" evidence="1">
    <location>
        <begin position="117"/>
        <end position="137"/>
    </location>
</feature>
<feature type="splice variant" id="VSP_058947" description="In isoform 1.">
    <location>
        <begin position="26"/>
        <end position="77"/>
    </location>
</feature>
<feature type="sequence conflict" description="In Ref. 1; AAU20812." evidence="6" ref="1">
    <original>V</original>
    <variation>L</variation>
    <location>
        <position position="25"/>
    </location>
</feature>
<feature type="sequence conflict" description="In Ref. 2; BAE20810." evidence="6" ref="2">
    <original>L</original>
    <variation>M</variation>
    <location>
        <position position="77"/>
    </location>
</feature>
<feature type="sequence conflict" description="In Ref. 2; BAE20810." evidence="6" ref="2">
    <original>V</original>
    <variation>A</variation>
    <location>
        <position position="85"/>
    </location>
</feature>
<proteinExistence type="evidence at transcript level"/>
<comment type="subcellular location">
    <subcellularLocation>
        <location evidence="6">Secreted</location>
    </subcellularLocation>
</comment>
<comment type="alternative products">
    <event type="alternative splicing"/>
    <isoform>
        <id>Q80Y72-1</id>
        <name evidence="5">2</name>
        <sequence type="displayed"/>
    </isoform>
    <isoform>
        <id>Q80Y72-2</id>
        <name evidence="5">1</name>
        <sequence type="described" ref="VSP_058947"/>
    </isoform>
</comment>
<comment type="tissue specificity">
    <text evidence="4">Highly expressed in testis where it localizes to spermatogonium, spermatocyes and round spermatids. Not detected in spermatozoa. Also detected in epididymis, cerebrum and pituitary.</text>
</comment>
<comment type="developmental stage">
    <text evidence="4">In testis, expression levels increase from postnatal week 4 onwards with peak levels at postnatal week 8. Expression remains high thereafter.</text>
</comment>
<comment type="similarity">
    <text evidence="2 3 6">Belongs to the cystatin family.</text>
</comment>
<accession>Q80Y72</accession>
<accession>Q3V2I7</accession>
<accession>Q64FK4</accession>
<accession>Q64FK5</accession>
<protein>
    <recommendedName>
        <fullName evidence="11">Cystatin-like 1</fullName>
    </recommendedName>
</protein>